<proteinExistence type="inferred from homology"/>
<evidence type="ECO:0000255" key="1">
    <source>
        <dbReference type="HAMAP-Rule" id="MF_00323"/>
    </source>
</evidence>
<keyword id="KW-0963">Cytoplasm</keyword>
<keyword id="KW-0350">Heme biosynthesis</keyword>
<keyword id="KW-0408">Iron</keyword>
<keyword id="KW-0456">Lyase</keyword>
<keyword id="KW-0479">Metal-binding</keyword>
<keyword id="KW-0627">Porphyrin biosynthesis</keyword>
<protein>
    <recommendedName>
        <fullName evidence="1">Coproporphyrin III ferrochelatase</fullName>
        <ecNumber evidence="1">4.99.1.9</ecNumber>
    </recommendedName>
</protein>
<organism>
    <name type="scientific">Bacillus mycoides (strain KBAB4)</name>
    <name type="common">Bacillus weihenstephanensis</name>
    <dbReference type="NCBI Taxonomy" id="315730"/>
    <lineage>
        <taxon>Bacteria</taxon>
        <taxon>Bacillati</taxon>
        <taxon>Bacillota</taxon>
        <taxon>Bacilli</taxon>
        <taxon>Bacillales</taxon>
        <taxon>Bacillaceae</taxon>
        <taxon>Bacillus</taxon>
        <taxon>Bacillus cereus group</taxon>
    </lineage>
</organism>
<gene>
    <name evidence="1" type="primary">cpfC</name>
    <name type="ordered locus">BcerKBAB4_0990</name>
</gene>
<reference key="1">
    <citation type="journal article" date="2008" name="Chem. Biol. Interact.">
        <title>Extending the Bacillus cereus group genomics to putative food-borne pathogens of different toxicity.</title>
        <authorList>
            <person name="Lapidus A."/>
            <person name="Goltsman E."/>
            <person name="Auger S."/>
            <person name="Galleron N."/>
            <person name="Segurens B."/>
            <person name="Dossat C."/>
            <person name="Land M.L."/>
            <person name="Broussolle V."/>
            <person name="Brillard J."/>
            <person name="Guinebretiere M.-H."/>
            <person name="Sanchis V."/>
            <person name="Nguen-the C."/>
            <person name="Lereclus D."/>
            <person name="Richardson P."/>
            <person name="Wincker P."/>
            <person name="Weissenbach J."/>
            <person name="Ehrlich S.D."/>
            <person name="Sorokin A."/>
        </authorList>
    </citation>
    <scope>NUCLEOTIDE SEQUENCE [LARGE SCALE GENOMIC DNA]</scope>
    <source>
        <strain>KBAB4</strain>
    </source>
</reference>
<accession>A9VI99</accession>
<comment type="function">
    <text evidence="1">Involved in coproporphyrin-dependent heme b biosynthesis. Catalyzes the insertion of ferrous iron into coproporphyrin III to form Fe-coproporphyrin III.</text>
</comment>
<comment type="catalytic activity">
    <reaction evidence="1">
        <text>Fe-coproporphyrin III + 2 H(+) = coproporphyrin III + Fe(2+)</text>
        <dbReference type="Rhea" id="RHEA:49572"/>
        <dbReference type="ChEBI" id="CHEBI:15378"/>
        <dbReference type="ChEBI" id="CHEBI:29033"/>
        <dbReference type="ChEBI" id="CHEBI:68438"/>
        <dbReference type="ChEBI" id="CHEBI:131725"/>
        <dbReference type="EC" id="4.99.1.9"/>
    </reaction>
    <physiologicalReaction direction="right-to-left" evidence="1">
        <dbReference type="Rhea" id="RHEA:49574"/>
    </physiologicalReaction>
</comment>
<comment type="pathway">
    <text evidence="1">Porphyrin-containing compound metabolism; protoheme biosynthesis.</text>
</comment>
<comment type="subcellular location">
    <subcellularLocation>
        <location evidence="1">Cytoplasm</location>
    </subcellularLocation>
</comment>
<comment type="similarity">
    <text evidence="1">Belongs to the ferrochelatase family.</text>
</comment>
<name>CPFC_BACMK</name>
<sequence>MKKKIGLLVMAYGTPYKEEDIERYYTHIRRGRKPSPEMLEDLTGRYRAIGGISPLATITLEQAKKLETRLNEMQDEVEYHMYLGLKHIEPFIEDAVQAMHKDGIEDAIALVLAPHYSTFSVKSYVGRAQEEAGKLGNLTIHGIDSWYKEPKFIQYWVDAVKGIYNGMSEAEREKAVLIVSAHSLPEKIIALGDPYPDQLNETADYIARGAEVANYAVGWQSAGNTPDPWIGPDVQDLTRELNEKYGYNSFVYAPVGFVAEHLEVLYDNDFECKVVTDEIGAKYYRPEMPNASDAFIDCLADVVLKKKESVM</sequence>
<dbReference type="EC" id="4.99.1.9" evidence="1"/>
<dbReference type="EMBL" id="CP000903">
    <property type="protein sequence ID" value="ABY42242.1"/>
    <property type="molecule type" value="Genomic_DNA"/>
</dbReference>
<dbReference type="SMR" id="A9VI99"/>
<dbReference type="KEGG" id="bwe:BcerKBAB4_0990"/>
<dbReference type="eggNOG" id="COG0276">
    <property type="taxonomic scope" value="Bacteria"/>
</dbReference>
<dbReference type="HOGENOM" id="CLU_018884_2_1_9"/>
<dbReference type="UniPathway" id="UPA00252"/>
<dbReference type="Proteomes" id="UP000002154">
    <property type="component" value="Chromosome"/>
</dbReference>
<dbReference type="GO" id="GO:0005737">
    <property type="term" value="C:cytoplasm"/>
    <property type="evidence" value="ECO:0007669"/>
    <property type="project" value="UniProtKB-SubCell"/>
</dbReference>
<dbReference type="GO" id="GO:0004325">
    <property type="term" value="F:ferrochelatase activity"/>
    <property type="evidence" value="ECO:0007669"/>
    <property type="project" value="UniProtKB-UniRule"/>
</dbReference>
<dbReference type="GO" id="GO:0046872">
    <property type="term" value="F:metal ion binding"/>
    <property type="evidence" value="ECO:0007669"/>
    <property type="project" value="UniProtKB-KW"/>
</dbReference>
<dbReference type="GO" id="GO:0006783">
    <property type="term" value="P:heme biosynthetic process"/>
    <property type="evidence" value="ECO:0007669"/>
    <property type="project" value="UniProtKB-UniRule"/>
</dbReference>
<dbReference type="CDD" id="cd00419">
    <property type="entry name" value="Ferrochelatase_C"/>
    <property type="match status" value="1"/>
</dbReference>
<dbReference type="CDD" id="cd03411">
    <property type="entry name" value="Ferrochelatase_N"/>
    <property type="match status" value="1"/>
</dbReference>
<dbReference type="FunFam" id="3.40.50.1400:FF:000009">
    <property type="entry name" value="Ferrochelatase"/>
    <property type="match status" value="1"/>
</dbReference>
<dbReference type="Gene3D" id="3.40.50.1400">
    <property type="match status" value="2"/>
</dbReference>
<dbReference type="HAMAP" id="MF_00323">
    <property type="entry name" value="Ferrochelatase"/>
    <property type="match status" value="1"/>
</dbReference>
<dbReference type="InterPro" id="IPR001015">
    <property type="entry name" value="Ferrochelatase"/>
</dbReference>
<dbReference type="InterPro" id="IPR019772">
    <property type="entry name" value="Ferrochelatase_AS"/>
</dbReference>
<dbReference type="InterPro" id="IPR033644">
    <property type="entry name" value="Ferrochelatase_C"/>
</dbReference>
<dbReference type="InterPro" id="IPR033659">
    <property type="entry name" value="Ferrochelatase_N"/>
</dbReference>
<dbReference type="NCBIfam" id="TIGR00109">
    <property type="entry name" value="hemH"/>
    <property type="match status" value="1"/>
</dbReference>
<dbReference type="NCBIfam" id="NF009095">
    <property type="entry name" value="PRK12435.1"/>
    <property type="match status" value="1"/>
</dbReference>
<dbReference type="PANTHER" id="PTHR11108">
    <property type="entry name" value="FERROCHELATASE"/>
    <property type="match status" value="1"/>
</dbReference>
<dbReference type="PANTHER" id="PTHR11108:SF1">
    <property type="entry name" value="FERROCHELATASE, MITOCHONDRIAL"/>
    <property type="match status" value="1"/>
</dbReference>
<dbReference type="Pfam" id="PF00762">
    <property type="entry name" value="Ferrochelatase"/>
    <property type="match status" value="1"/>
</dbReference>
<dbReference type="SUPFAM" id="SSF53800">
    <property type="entry name" value="Chelatase"/>
    <property type="match status" value="1"/>
</dbReference>
<dbReference type="PROSITE" id="PS00534">
    <property type="entry name" value="FERROCHELATASE"/>
    <property type="match status" value="1"/>
</dbReference>
<feature type="chain" id="PRO_1000116030" description="Coproporphyrin III ferrochelatase">
    <location>
        <begin position="1"/>
        <end position="311"/>
    </location>
</feature>
<feature type="binding site" description="axial binding residue" evidence="1">
    <location>
        <position position="12"/>
    </location>
    <ligand>
        <name>Fe-coproporphyrin III</name>
        <dbReference type="ChEBI" id="CHEBI:68438"/>
    </ligand>
    <ligandPart>
        <name>Fe</name>
        <dbReference type="ChEBI" id="CHEBI:18248"/>
    </ligandPart>
</feature>
<feature type="binding site" evidence="1">
    <location>
        <position position="29"/>
    </location>
    <ligand>
        <name>Fe-coproporphyrin III</name>
        <dbReference type="ChEBI" id="CHEBI:68438"/>
    </ligand>
</feature>
<feature type="binding site" evidence="1">
    <location>
        <begin position="45"/>
        <end position="46"/>
    </location>
    <ligand>
        <name>Fe-coproporphyrin III</name>
        <dbReference type="ChEBI" id="CHEBI:68438"/>
    </ligand>
</feature>
<feature type="binding site" evidence="1">
    <location>
        <position position="53"/>
    </location>
    <ligand>
        <name>Fe-coproporphyrin III</name>
        <dbReference type="ChEBI" id="CHEBI:68438"/>
    </ligand>
</feature>
<feature type="binding site" evidence="1">
    <location>
        <position position="124"/>
    </location>
    <ligand>
        <name>Fe-coproporphyrin III</name>
        <dbReference type="ChEBI" id="CHEBI:68438"/>
    </ligand>
</feature>
<feature type="binding site" evidence="1">
    <location>
        <position position="182"/>
    </location>
    <ligand>
        <name>Fe(2+)</name>
        <dbReference type="ChEBI" id="CHEBI:29033"/>
    </ligand>
</feature>
<feature type="binding site" evidence="1">
    <location>
        <position position="263"/>
    </location>
    <ligand>
        <name>Fe(2+)</name>
        <dbReference type="ChEBI" id="CHEBI:29033"/>
    </ligand>
</feature>